<gene>
    <name type="primary">RNASE2</name>
    <name type="synonym">EDN</name>
    <name type="synonym">RNS2</name>
</gene>
<name>RNAS2_AOTTR</name>
<dbReference type="EC" id="4.6.1.18" evidence="4"/>
<dbReference type="EMBL" id="U88827">
    <property type="protein sequence ID" value="AAB71338.1"/>
    <property type="molecule type" value="Genomic_DNA"/>
</dbReference>
<dbReference type="BMRB" id="O18937"/>
<dbReference type="SMR" id="O18937"/>
<dbReference type="GlyCosmos" id="O18937">
    <property type="glycosylation" value="3 sites, No reported glycans"/>
</dbReference>
<dbReference type="GO" id="GO:0005615">
    <property type="term" value="C:extracellular space"/>
    <property type="evidence" value="ECO:0007669"/>
    <property type="project" value="TreeGrafter"/>
</dbReference>
<dbReference type="GO" id="GO:0005764">
    <property type="term" value="C:lysosome"/>
    <property type="evidence" value="ECO:0007669"/>
    <property type="project" value="UniProtKB-SubCell"/>
</dbReference>
<dbReference type="GO" id="GO:0016829">
    <property type="term" value="F:lyase activity"/>
    <property type="evidence" value="ECO:0007669"/>
    <property type="project" value="UniProtKB-KW"/>
</dbReference>
<dbReference type="GO" id="GO:0003676">
    <property type="term" value="F:nucleic acid binding"/>
    <property type="evidence" value="ECO:0007669"/>
    <property type="project" value="InterPro"/>
</dbReference>
<dbReference type="GO" id="GO:0004522">
    <property type="term" value="F:ribonuclease A activity"/>
    <property type="evidence" value="ECO:0007669"/>
    <property type="project" value="UniProtKB-EC"/>
</dbReference>
<dbReference type="GO" id="GO:0006935">
    <property type="term" value="P:chemotaxis"/>
    <property type="evidence" value="ECO:0007669"/>
    <property type="project" value="TreeGrafter"/>
</dbReference>
<dbReference type="GO" id="GO:0051607">
    <property type="term" value="P:defense response to virus"/>
    <property type="evidence" value="ECO:0000314"/>
    <property type="project" value="UniProtKB"/>
</dbReference>
<dbReference type="GO" id="GO:0002227">
    <property type="term" value="P:innate immune response in mucosa"/>
    <property type="evidence" value="ECO:0007669"/>
    <property type="project" value="TreeGrafter"/>
</dbReference>
<dbReference type="CDD" id="cd06265">
    <property type="entry name" value="RNase_A_canonical"/>
    <property type="match status" value="1"/>
</dbReference>
<dbReference type="FunFam" id="3.10.130.10:FF:000001">
    <property type="entry name" value="Ribonuclease pancreatic"/>
    <property type="match status" value="1"/>
</dbReference>
<dbReference type="Gene3D" id="3.10.130.10">
    <property type="entry name" value="Ribonuclease A-like domain"/>
    <property type="match status" value="1"/>
</dbReference>
<dbReference type="InterPro" id="IPR001427">
    <property type="entry name" value="RNaseA"/>
</dbReference>
<dbReference type="InterPro" id="IPR036816">
    <property type="entry name" value="RNaseA-like_dom_sf"/>
</dbReference>
<dbReference type="InterPro" id="IPR023411">
    <property type="entry name" value="RNaseA_AS"/>
</dbReference>
<dbReference type="InterPro" id="IPR023412">
    <property type="entry name" value="RNaseA_domain"/>
</dbReference>
<dbReference type="PANTHER" id="PTHR11437:SF62">
    <property type="entry name" value="NON-SECRETORY RIBONUCLEASE"/>
    <property type="match status" value="1"/>
</dbReference>
<dbReference type="PANTHER" id="PTHR11437">
    <property type="entry name" value="RIBONUCLEASE"/>
    <property type="match status" value="1"/>
</dbReference>
<dbReference type="Pfam" id="PF00074">
    <property type="entry name" value="RnaseA"/>
    <property type="match status" value="1"/>
</dbReference>
<dbReference type="PRINTS" id="PR00794">
    <property type="entry name" value="RIBONUCLEASE"/>
</dbReference>
<dbReference type="SMART" id="SM00092">
    <property type="entry name" value="RNAse_Pc"/>
    <property type="match status" value="1"/>
</dbReference>
<dbReference type="SUPFAM" id="SSF54076">
    <property type="entry name" value="RNase A-like"/>
    <property type="match status" value="1"/>
</dbReference>
<dbReference type="PROSITE" id="PS00127">
    <property type="entry name" value="RNASE_PANCREATIC"/>
    <property type="match status" value="1"/>
</dbReference>
<organism>
    <name type="scientific">Aotus trivirgatus</name>
    <name type="common">Three-striped night monkey</name>
    <name type="synonym">Douroucouli</name>
    <dbReference type="NCBI Taxonomy" id="9505"/>
    <lineage>
        <taxon>Eukaryota</taxon>
        <taxon>Metazoa</taxon>
        <taxon>Chordata</taxon>
        <taxon>Craniata</taxon>
        <taxon>Vertebrata</taxon>
        <taxon>Euteleostomi</taxon>
        <taxon>Mammalia</taxon>
        <taxon>Eutheria</taxon>
        <taxon>Euarchontoglires</taxon>
        <taxon>Primates</taxon>
        <taxon>Haplorrhini</taxon>
        <taxon>Platyrrhini</taxon>
        <taxon>Aotidae</taxon>
        <taxon>Aotus</taxon>
    </lineage>
</organism>
<proteinExistence type="evidence at protein level"/>
<feature type="signal peptide" evidence="3">
    <location>
        <begin position="1"/>
        <end position="27"/>
    </location>
</feature>
<feature type="chain" id="PRO_0000030871" description="Non-secretory ribonuclease">
    <location>
        <begin position="28"/>
        <end position="158"/>
    </location>
</feature>
<feature type="active site" description="Proton acceptor" evidence="1">
    <location>
        <position position="42"/>
    </location>
</feature>
<feature type="active site" description="Proton donor" evidence="1">
    <location>
        <position position="153"/>
    </location>
</feature>
<feature type="binding site" evidence="1">
    <location>
        <begin position="65"/>
        <end position="69"/>
    </location>
    <ligand>
        <name>substrate</name>
    </ligand>
</feature>
<feature type="modified residue" description="3'-nitrotyrosine" evidence="2">
    <location>
        <position position="60"/>
    </location>
</feature>
<feature type="glycosylation site" description="N-linked (GlcNAc...) asparagine" evidence="3">
    <location>
        <position position="86"/>
    </location>
</feature>
<feature type="glycosylation site" description="N-linked (GlcNAc...) asparagine" evidence="3">
    <location>
        <position position="92"/>
    </location>
</feature>
<feature type="glycosylation site" description="N-linked (GlcNAc...) asparagine" evidence="3">
    <location>
        <position position="111"/>
    </location>
</feature>
<feature type="disulfide bond" evidence="1">
    <location>
        <begin position="50"/>
        <end position="110"/>
    </location>
</feature>
<feature type="disulfide bond" evidence="1">
    <location>
        <begin position="64"/>
        <end position="121"/>
    </location>
</feature>
<feature type="disulfide bond" evidence="1">
    <location>
        <begin position="82"/>
        <end position="136"/>
    </location>
</feature>
<feature type="disulfide bond" evidence="1">
    <location>
        <begin position="89"/>
        <end position="98"/>
    </location>
</feature>
<evidence type="ECO:0000250" key="1"/>
<evidence type="ECO:0000250" key="2">
    <source>
        <dbReference type="UniProtKB" id="P10153"/>
    </source>
</evidence>
<evidence type="ECO:0000255" key="3"/>
<evidence type="ECO:0000269" key="4">
    <source>
    </source>
</evidence>
<evidence type="ECO:0000305" key="5"/>
<keyword id="KW-1015">Disulfide bond</keyword>
<keyword id="KW-0255">Endonuclease</keyword>
<keyword id="KW-0325">Glycoprotein</keyword>
<keyword id="KW-0378">Hydrolase</keyword>
<keyword id="KW-0456">Lyase</keyword>
<keyword id="KW-0458">Lysosome</keyword>
<keyword id="KW-0944">Nitration</keyword>
<keyword id="KW-0540">Nuclease</keyword>
<keyword id="KW-0732">Signal</keyword>
<accession>O18937</accession>
<reference key="1">
    <citation type="journal article" date="1997" name="Nucleic Acids Res.">
        <title>Diversity among the primate eosinophil-derived neurotoxin genes: a specific C-terminal sequence is necessary for enhanced ribonuclease activity.</title>
        <authorList>
            <person name="Rosenberg H.F."/>
            <person name="Dyer K.D."/>
        </authorList>
    </citation>
    <scope>NUCLEOTIDE SEQUENCE [GENOMIC DNA]</scope>
    <scope>FUNCTION</scope>
    <scope>CATALYTIC ACTIVITY</scope>
    <scope>BIOPHYSICOCHEMICAL PROPERTIES</scope>
</reference>
<sequence length="158" mass="17714">MVPKLFTSQICLLLLLGLLGVEGSLHAAPQKFTRAQWFSIQHIQTTPLRCTNAMRAINKYQHRCKNQNTFLHTTFAAVVNVCGNTNITCPRNASLNNCHHSRVQVPLTYCNLTGPPTITNCVYSSTQANMFYVVACDNRDQRDPPQYPVVPVHLDTTI</sequence>
<comment type="function">
    <text evidence="4">This is a non-secretory ribonuclease. It is a pyrimidine specific nuclease with a slight preference for U. Cytotoxin and helminthotoxin. Possesses a wide variety of biological activities.</text>
</comment>
<comment type="catalytic activity">
    <reaction evidence="4">
        <text>an [RNA] containing cytidine + H2O = an [RNA]-3'-cytidine-3'-phosphate + a 5'-hydroxy-ribonucleotide-3'-[RNA].</text>
        <dbReference type="EC" id="4.6.1.18"/>
    </reaction>
</comment>
<comment type="catalytic activity">
    <reaction evidence="4">
        <text>an [RNA] containing uridine + H2O = an [RNA]-3'-uridine-3'-phosphate + a 5'-hydroxy-ribonucleotide-3'-[RNA].</text>
        <dbReference type="EC" id="4.6.1.18"/>
    </reaction>
</comment>
<comment type="biophysicochemical properties">
    <kinetics>
        <KM evidence="4">2 uM for yeast tRNA (in the presence of 40 mM sodium phosphate at pH 7.0)</KM>
    </kinetics>
</comment>
<comment type="subunit">
    <text evidence="1">Interacts with and forms a tight 1:1 complex with RNH1. Dimerization of two such complexes may occur (By similarity).</text>
</comment>
<comment type="subcellular location">
    <subcellularLocation>
        <location evidence="5">Lysosome</location>
    </subcellularLocation>
    <subcellularLocation>
        <location>Cytoplasmic granule</location>
    </subcellularLocation>
    <text>Matrix of eosinophil's large specific granule.</text>
</comment>
<comment type="similarity">
    <text evidence="5">Belongs to the pancreatic ribonuclease family.</text>
</comment>
<protein>
    <recommendedName>
        <fullName>Non-secretory ribonuclease</fullName>
        <ecNumber evidence="4">4.6.1.18</ecNumber>
    </recommendedName>
    <alternativeName>
        <fullName>Eosinophil-derived neurotoxin</fullName>
    </alternativeName>
    <alternativeName>
        <fullName>RNase UpI-2</fullName>
    </alternativeName>
    <alternativeName>
        <fullName>Ribonuclease 2</fullName>
        <shortName>RNase 2</shortName>
    </alternativeName>
    <alternativeName>
        <fullName>Ribonuclease US</fullName>
    </alternativeName>
</protein>